<feature type="chain" id="PRO_1000020116" description="Methionyl-tRNA formyltransferase">
    <location>
        <begin position="1"/>
        <end position="307"/>
    </location>
</feature>
<feature type="binding site" evidence="1">
    <location>
        <begin position="109"/>
        <end position="112"/>
    </location>
    <ligand>
        <name>(6S)-5,6,7,8-tetrahydrofolate</name>
        <dbReference type="ChEBI" id="CHEBI:57453"/>
    </ligand>
</feature>
<protein>
    <recommendedName>
        <fullName evidence="1">Methionyl-tRNA formyltransferase</fullName>
        <ecNumber evidence="1">2.1.2.9</ecNumber>
    </recommendedName>
</protein>
<organism>
    <name type="scientific">Orientia tsutsugamushi (strain Boryong)</name>
    <name type="common">Rickettsia tsutsugamushi</name>
    <dbReference type="NCBI Taxonomy" id="357244"/>
    <lineage>
        <taxon>Bacteria</taxon>
        <taxon>Pseudomonadati</taxon>
        <taxon>Pseudomonadota</taxon>
        <taxon>Alphaproteobacteria</taxon>
        <taxon>Rickettsiales</taxon>
        <taxon>Rickettsiaceae</taxon>
        <taxon>Rickettsieae</taxon>
        <taxon>Orientia</taxon>
    </lineage>
</organism>
<sequence>MKIIFMGSPEFAIPALKELVLSKHNVIAVFTSKPKKRDRYLNIQRSPIHKLASALSIPVYTPDSLKTNDVQNLIATFDADVIVVAAYGLIIPKAILKMKKYGCINIHPSMLPKYRGAAPIQRTIINGEKETAVCIIQMDQGVDTGDIILCQKFHLAKNICFSELHDQCAKVGAKLVVKAINYIHTLPRIPQSQDRASYAHKLSKSESKINWYESAYTIDCKIRGMNPWPGTFFTHNNCNIKVLKAKIVNNSHNLQPGTVKIANNDKLLVACQEHFLELLSLQLPGRKELSSDQFLCGYHILPDTVLQ</sequence>
<comment type="function">
    <text evidence="1">Attaches a formyl group to the free amino group of methionyl-tRNA(fMet). The formyl group appears to play a dual role in the initiator identity of N-formylmethionyl-tRNA by promoting its recognition by IF2 and preventing the misappropriation of this tRNA by the elongation apparatus.</text>
</comment>
<comment type="catalytic activity">
    <reaction evidence="1">
        <text>L-methionyl-tRNA(fMet) + (6R)-10-formyltetrahydrofolate = N-formyl-L-methionyl-tRNA(fMet) + (6S)-5,6,7,8-tetrahydrofolate + H(+)</text>
        <dbReference type="Rhea" id="RHEA:24380"/>
        <dbReference type="Rhea" id="RHEA-COMP:9952"/>
        <dbReference type="Rhea" id="RHEA-COMP:9953"/>
        <dbReference type="ChEBI" id="CHEBI:15378"/>
        <dbReference type="ChEBI" id="CHEBI:57453"/>
        <dbReference type="ChEBI" id="CHEBI:78530"/>
        <dbReference type="ChEBI" id="CHEBI:78844"/>
        <dbReference type="ChEBI" id="CHEBI:195366"/>
        <dbReference type="EC" id="2.1.2.9"/>
    </reaction>
</comment>
<comment type="similarity">
    <text evidence="1">Belongs to the Fmt family.</text>
</comment>
<keyword id="KW-0648">Protein biosynthesis</keyword>
<keyword id="KW-1185">Reference proteome</keyword>
<keyword id="KW-0808">Transferase</keyword>
<reference key="1">
    <citation type="journal article" date="2007" name="Proc. Natl. Acad. Sci. U.S.A.">
        <title>The Orientia tsutsugamushi genome reveals massive proliferation of conjugative type IV secretion system and host-cell interaction genes.</title>
        <authorList>
            <person name="Cho N.-H."/>
            <person name="Kim H.-R."/>
            <person name="Lee J.-H."/>
            <person name="Kim S.-Y."/>
            <person name="Kim J."/>
            <person name="Cha S."/>
            <person name="Kim S.-Y."/>
            <person name="Darby A.C."/>
            <person name="Fuxelius H.-H."/>
            <person name="Yin J."/>
            <person name="Kim J.H."/>
            <person name="Kim J."/>
            <person name="Lee S.J."/>
            <person name="Koh Y.-S."/>
            <person name="Jang W.-J."/>
            <person name="Park K.-H."/>
            <person name="Andersson S.G.E."/>
            <person name="Choi M.-S."/>
            <person name="Kim I.-S."/>
        </authorList>
    </citation>
    <scope>NUCLEOTIDE SEQUENCE [LARGE SCALE GENOMIC DNA]</scope>
    <source>
        <strain>Boryong</strain>
    </source>
</reference>
<evidence type="ECO:0000255" key="1">
    <source>
        <dbReference type="HAMAP-Rule" id="MF_00182"/>
    </source>
</evidence>
<dbReference type="EC" id="2.1.2.9" evidence="1"/>
<dbReference type="EMBL" id="AM494475">
    <property type="protein sequence ID" value="CAM80943.1"/>
    <property type="molecule type" value="Genomic_DNA"/>
</dbReference>
<dbReference type="RefSeq" id="WP_011945080.1">
    <property type="nucleotide sequence ID" value="NC_009488.1"/>
</dbReference>
<dbReference type="SMR" id="A5CF64"/>
<dbReference type="KEGG" id="ots:OTBS_1848"/>
<dbReference type="eggNOG" id="COG0223">
    <property type="taxonomic scope" value="Bacteria"/>
</dbReference>
<dbReference type="HOGENOM" id="CLU_033347_1_1_5"/>
<dbReference type="Proteomes" id="UP000001565">
    <property type="component" value="Chromosome"/>
</dbReference>
<dbReference type="GO" id="GO:0005829">
    <property type="term" value="C:cytosol"/>
    <property type="evidence" value="ECO:0007669"/>
    <property type="project" value="TreeGrafter"/>
</dbReference>
<dbReference type="GO" id="GO:0004479">
    <property type="term" value="F:methionyl-tRNA formyltransferase activity"/>
    <property type="evidence" value="ECO:0007669"/>
    <property type="project" value="UniProtKB-UniRule"/>
</dbReference>
<dbReference type="CDD" id="cd08646">
    <property type="entry name" value="FMT_core_Met-tRNA-FMT_N"/>
    <property type="match status" value="1"/>
</dbReference>
<dbReference type="CDD" id="cd08704">
    <property type="entry name" value="Met_tRNA_FMT_C"/>
    <property type="match status" value="1"/>
</dbReference>
<dbReference type="Gene3D" id="3.10.25.10">
    <property type="entry name" value="Formyl transferase, C-terminal domain"/>
    <property type="match status" value="1"/>
</dbReference>
<dbReference type="Gene3D" id="3.40.50.170">
    <property type="entry name" value="Formyl transferase, N-terminal domain"/>
    <property type="match status" value="1"/>
</dbReference>
<dbReference type="HAMAP" id="MF_00182">
    <property type="entry name" value="Formyl_trans"/>
    <property type="match status" value="1"/>
</dbReference>
<dbReference type="InterPro" id="IPR005794">
    <property type="entry name" value="Fmt"/>
</dbReference>
<dbReference type="InterPro" id="IPR005793">
    <property type="entry name" value="Formyl_trans_C"/>
</dbReference>
<dbReference type="InterPro" id="IPR037022">
    <property type="entry name" value="Formyl_trans_C_sf"/>
</dbReference>
<dbReference type="InterPro" id="IPR002376">
    <property type="entry name" value="Formyl_transf_N"/>
</dbReference>
<dbReference type="InterPro" id="IPR036477">
    <property type="entry name" value="Formyl_transf_N_sf"/>
</dbReference>
<dbReference type="InterPro" id="IPR011034">
    <property type="entry name" value="Formyl_transferase-like_C_sf"/>
</dbReference>
<dbReference type="InterPro" id="IPR044135">
    <property type="entry name" value="Met-tRNA-FMT_C"/>
</dbReference>
<dbReference type="InterPro" id="IPR041711">
    <property type="entry name" value="Met-tRNA-FMT_N"/>
</dbReference>
<dbReference type="NCBIfam" id="TIGR00460">
    <property type="entry name" value="fmt"/>
    <property type="match status" value="1"/>
</dbReference>
<dbReference type="PANTHER" id="PTHR11138">
    <property type="entry name" value="METHIONYL-TRNA FORMYLTRANSFERASE"/>
    <property type="match status" value="1"/>
</dbReference>
<dbReference type="PANTHER" id="PTHR11138:SF5">
    <property type="entry name" value="METHIONYL-TRNA FORMYLTRANSFERASE, MITOCHONDRIAL"/>
    <property type="match status" value="1"/>
</dbReference>
<dbReference type="Pfam" id="PF02911">
    <property type="entry name" value="Formyl_trans_C"/>
    <property type="match status" value="1"/>
</dbReference>
<dbReference type="Pfam" id="PF00551">
    <property type="entry name" value="Formyl_trans_N"/>
    <property type="match status" value="1"/>
</dbReference>
<dbReference type="SUPFAM" id="SSF50486">
    <property type="entry name" value="FMT C-terminal domain-like"/>
    <property type="match status" value="1"/>
</dbReference>
<dbReference type="SUPFAM" id="SSF53328">
    <property type="entry name" value="Formyltransferase"/>
    <property type="match status" value="1"/>
</dbReference>
<gene>
    <name evidence="1" type="primary">fmt</name>
    <name type="ordered locus">OTBS_1848</name>
</gene>
<name>FMT_ORITB</name>
<accession>A5CF64</accession>
<proteinExistence type="inferred from homology"/>